<sequence length="250" mass="29088">MNNNSFHEYNFNSEYLNKICCNKSYVCYMGQHFSPCALQENSSTWKRHAEESSSENDKGNVWNFQNLSNVQHPYSFSDDGNHSLDPANALERKKACELSTSCLSTMKYPWMRETHAPTHFSSINAMESGDSKYSNGEAVVRNSSSKRARVAFTSSQLLELEKEFHFSAYLCRNRRLEMAELLKLTDRQIKIWFQNRRMKYKKDHKEKSTAKSSYTYLGTENQPLIISRSTTDSPVPLKFQNNYETPSMNW</sequence>
<protein>
    <recommendedName>
        <fullName>Homeobox protein Hox-C3a</fullName>
    </recommendedName>
    <alternativeName>
        <fullName>Homeobox protein Zf-114</fullName>
    </alternativeName>
    <alternativeName>
        <fullName>Hox-114</fullName>
    </alternativeName>
</protein>
<keyword id="KW-0217">Developmental protein</keyword>
<keyword id="KW-0238">DNA-binding</keyword>
<keyword id="KW-0371">Homeobox</keyword>
<keyword id="KW-0539">Nucleus</keyword>
<keyword id="KW-1185">Reference proteome</keyword>
<reference key="1">
    <citation type="journal article" date="1992" name="Int. J. Dev. Biol.">
        <title>The zebrafish homeobox gene hox[zf-114]: primary structure, expression pattern and evolutionary aspects.</title>
        <authorList>
            <person name="Molven A."/>
            <person name="Hordvik I."/>
            <person name="Njolstad P.R."/>
            <person name="van Ghelue M."/>
            <person name="Fjose A."/>
        </authorList>
    </citation>
    <scope>NUCLEOTIDE SEQUENCE [MRNA]</scope>
</reference>
<feature type="chain" id="PRO_0000200163" description="Homeobox protein Hox-C3a">
    <location>
        <begin position="1"/>
        <end position="250"/>
    </location>
</feature>
<feature type="DNA-binding region" description="Homeobox" evidence="2">
    <location>
        <begin position="145"/>
        <end position="204"/>
    </location>
</feature>
<feature type="short sequence motif" description="Antp-type hexapeptide">
    <location>
        <begin position="107"/>
        <end position="112"/>
    </location>
</feature>
<gene>
    <name type="primary">hoxc3a</name>
    <name type="synonym">zf114</name>
</gene>
<proteinExistence type="evidence at transcript level"/>
<name>HXC3A_DANRE</name>
<evidence type="ECO:0000250" key="1"/>
<evidence type="ECO:0000255" key="2">
    <source>
        <dbReference type="PROSITE-ProRule" id="PRU00108"/>
    </source>
</evidence>
<evidence type="ECO:0000305" key="3"/>
<comment type="function">
    <text evidence="1">Sequence-specific transcription factor which is part of a developmental regulatory system that provides cells with specific positional identities on the anterior-posterior axis.</text>
</comment>
<comment type="subcellular location">
    <subcellularLocation>
        <location evidence="2">Nucleus</location>
    </subcellularLocation>
</comment>
<comment type="similarity">
    <text evidence="3">Belongs to the Antp homeobox family.</text>
</comment>
<organism>
    <name type="scientific">Danio rerio</name>
    <name type="common">Zebrafish</name>
    <name type="synonym">Brachydanio rerio</name>
    <dbReference type="NCBI Taxonomy" id="7955"/>
    <lineage>
        <taxon>Eukaryota</taxon>
        <taxon>Metazoa</taxon>
        <taxon>Chordata</taxon>
        <taxon>Craniata</taxon>
        <taxon>Vertebrata</taxon>
        <taxon>Euteleostomi</taxon>
        <taxon>Actinopterygii</taxon>
        <taxon>Neopterygii</taxon>
        <taxon>Teleostei</taxon>
        <taxon>Ostariophysi</taxon>
        <taxon>Cypriniformes</taxon>
        <taxon>Danionidae</taxon>
        <taxon>Danioninae</taxon>
        <taxon>Danio</taxon>
    </lineage>
</organism>
<dbReference type="EMBL" id="X60095">
    <property type="protein sequence ID" value="CAA42691.1"/>
    <property type="molecule type" value="mRNA"/>
</dbReference>
<dbReference type="PIR" id="I50105">
    <property type="entry name" value="S15556"/>
</dbReference>
<dbReference type="SMR" id="P28174"/>
<dbReference type="STRING" id="7955.ENSDARP00000129398"/>
<dbReference type="PaxDb" id="7955-ENSDARP00000129398"/>
<dbReference type="AGR" id="ZFIN:ZDB-GENE-980526-532"/>
<dbReference type="ZFIN" id="ZDB-GENE-980526-532">
    <property type="gene designation" value="hoxc3a"/>
</dbReference>
<dbReference type="eggNOG" id="KOG0489">
    <property type="taxonomic scope" value="Eukaryota"/>
</dbReference>
<dbReference type="InParanoid" id="P28174"/>
<dbReference type="PRO" id="PR:P28174"/>
<dbReference type="Proteomes" id="UP000000437">
    <property type="component" value="Unplaced"/>
</dbReference>
<dbReference type="GO" id="GO:0005634">
    <property type="term" value="C:nucleus"/>
    <property type="evidence" value="ECO:0000318"/>
    <property type="project" value="GO_Central"/>
</dbReference>
<dbReference type="GO" id="GO:0000981">
    <property type="term" value="F:DNA-binding transcription factor activity, RNA polymerase II-specific"/>
    <property type="evidence" value="ECO:0000318"/>
    <property type="project" value="GO_Central"/>
</dbReference>
<dbReference type="GO" id="GO:0000978">
    <property type="term" value="F:RNA polymerase II cis-regulatory region sequence-specific DNA binding"/>
    <property type="evidence" value="ECO:0000318"/>
    <property type="project" value="GO_Central"/>
</dbReference>
<dbReference type="GO" id="GO:0009952">
    <property type="term" value="P:anterior/posterior pattern specification"/>
    <property type="evidence" value="ECO:0000318"/>
    <property type="project" value="GO_Central"/>
</dbReference>
<dbReference type="GO" id="GO:0048704">
    <property type="term" value="P:embryonic skeletal system morphogenesis"/>
    <property type="evidence" value="ECO:0000318"/>
    <property type="project" value="GO_Central"/>
</dbReference>
<dbReference type="GO" id="GO:0006357">
    <property type="term" value="P:regulation of transcription by RNA polymerase II"/>
    <property type="evidence" value="ECO:0000318"/>
    <property type="project" value="GO_Central"/>
</dbReference>
<dbReference type="CDD" id="cd00086">
    <property type="entry name" value="homeodomain"/>
    <property type="match status" value="1"/>
</dbReference>
<dbReference type="FunFam" id="1.10.10.60:FF:000176">
    <property type="entry name" value="pancreas/duodenum homeobox protein 1"/>
    <property type="match status" value="1"/>
</dbReference>
<dbReference type="Gene3D" id="1.10.10.60">
    <property type="entry name" value="Homeodomain-like"/>
    <property type="match status" value="1"/>
</dbReference>
<dbReference type="InterPro" id="IPR001356">
    <property type="entry name" value="HD"/>
</dbReference>
<dbReference type="InterPro" id="IPR020479">
    <property type="entry name" value="HD_metazoa"/>
</dbReference>
<dbReference type="InterPro" id="IPR017970">
    <property type="entry name" value="Homeobox_CS"/>
</dbReference>
<dbReference type="InterPro" id="IPR009057">
    <property type="entry name" value="Homeodomain-like_sf"/>
</dbReference>
<dbReference type="PANTHER" id="PTHR45664:SF11">
    <property type="entry name" value="HOMEOBOX PROTEIN HOX-B3"/>
    <property type="match status" value="1"/>
</dbReference>
<dbReference type="PANTHER" id="PTHR45664">
    <property type="entry name" value="PROTEIN ZERKNUELLT 1-RELATED"/>
    <property type="match status" value="1"/>
</dbReference>
<dbReference type="Pfam" id="PF00046">
    <property type="entry name" value="Homeodomain"/>
    <property type="match status" value="1"/>
</dbReference>
<dbReference type="PRINTS" id="PR00024">
    <property type="entry name" value="HOMEOBOX"/>
</dbReference>
<dbReference type="SMART" id="SM00389">
    <property type="entry name" value="HOX"/>
    <property type="match status" value="1"/>
</dbReference>
<dbReference type="SUPFAM" id="SSF46689">
    <property type="entry name" value="Homeodomain-like"/>
    <property type="match status" value="1"/>
</dbReference>
<dbReference type="PROSITE" id="PS00027">
    <property type="entry name" value="HOMEOBOX_1"/>
    <property type="match status" value="1"/>
</dbReference>
<dbReference type="PROSITE" id="PS50071">
    <property type="entry name" value="HOMEOBOX_2"/>
    <property type="match status" value="1"/>
</dbReference>
<accession>P28174</accession>